<gene>
    <name type="primary">kni</name>
    <name type="synonym">NR0A1</name>
    <name type="ORF">CG4717</name>
</gene>
<reference key="1">
    <citation type="journal article" date="1988" name="Nature">
        <title>Abdominal segmentation of the Drosophila embryo requires a hormone receptor-like protein encoded by the gap gene knirps.</title>
        <authorList>
            <person name="Nauber U."/>
            <person name="Pankratz M.J."/>
            <person name="Kilnlin A."/>
            <person name="Seyffert E."/>
            <person name="Klemm U."/>
            <person name="Jackle H."/>
        </authorList>
    </citation>
    <scope>NUCLEOTIDE SEQUENCE [GENOMIC DNA]</scope>
    <source>
        <strain>Oregon-R</strain>
        <tissue>Salivary gland</tissue>
    </source>
</reference>
<reference key="2">
    <citation type="journal article" date="2000" name="Science">
        <title>The genome sequence of Drosophila melanogaster.</title>
        <authorList>
            <person name="Adams M.D."/>
            <person name="Celniker S.E."/>
            <person name="Holt R.A."/>
            <person name="Evans C.A."/>
            <person name="Gocayne J.D."/>
            <person name="Amanatides P.G."/>
            <person name="Scherer S.E."/>
            <person name="Li P.W."/>
            <person name="Hoskins R.A."/>
            <person name="Galle R.F."/>
            <person name="George R.A."/>
            <person name="Lewis S.E."/>
            <person name="Richards S."/>
            <person name="Ashburner M."/>
            <person name="Henderson S.N."/>
            <person name="Sutton G.G."/>
            <person name="Wortman J.R."/>
            <person name="Yandell M.D."/>
            <person name="Zhang Q."/>
            <person name="Chen L.X."/>
            <person name="Brandon R.C."/>
            <person name="Rogers Y.-H.C."/>
            <person name="Blazej R.G."/>
            <person name="Champe M."/>
            <person name="Pfeiffer B.D."/>
            <person name="Wan K.H."/>
            <person name="Doyle C."/>
            <person name="Baxter E.G."/>
            <person name="Helt G."/>
            <person name="Nelson C.R."/>
            <person name="Miklos G.L.G."/>
            <person name="Abril J.F."/>
            <person name="Agbayani A."/>
            <person name="An H.-J."/>
            <person name="Andrews-Pfannkoch C."/>
            <person name="Baldwin D."/>
            <person name="Ballew R.M."/>
            <person name="Basu A."/>
            <person name="Baxendale J."/>
            <person name="Bayraktaroglu L."/>
            <person name="Beasley E.M."/>
            <person name="Beeson K.Y."/>
            <person name="Benos P.V."/>
            <person name="Berman B.P."/>
            <person name="Bhandari D."/>
            <person name="Bolshakov S."/>
            <person name="Borkova D."/>
            <person name="Botchan M.R."/>
            <person name="Bouck J."/>
            <person name="Brokstein P."/>
            <person name="Brottier P."/>
            <person name="Burtis K.C."/>
            <person name="Busam D.A."/>
            <person name="Butler H."/>
            <person name="Cadieu E."/>
            <person name="Center A."/>
            <person name="Chandra I."/>
            <person name="Cherry J.M."/>
            <person name="Cawley S."/>
            <person name="Dahlke C."/>
            <person name="Davenport L.B."/>
            <person name="Davies P."/>
            <person name="de Pablos B."/>
            <person name="Delcher A."/>
            <person name="Deng Z."/>
            <person name="Mays A.D."/>
            <person name="Dew I."/>
            <person name="Dietz S.M."/>
            <person name="Dodson K."/>
            <person name="Doup L.E."/>
            <person name="Downes M."/>
            <person name="Dugan-Rocha S."/>
            <person name="Dunkov B.C."/>
            <person name="Dunn P."/>
            <person name="Durbin K.J."/>
            <person name="Evangelista C.C."/>
            <person name="Ferraz C."/>
            <person name="Ferriera S."/>
            <person name="Fleischmann W."/>
            <person name="Fosler C."/>
            <person name="Gabrielian A.E."/>
            <person name="Garg N.S."/>
            <person name="Gelbart W.M."/>
            <person name="Glasser K."/>
            <person name="Glodek A."/>
            <person name="Gong F."/>
            <person name="Gorrell J.H."/>
            <person name="Gu Z."/>
            <person name="Guan P."/>
            <person name="Harris M."/>
            <person name="Harris N.L."/>
            <person name="Harvey D.A."/>
            <person name="Heiman T.J."/>
            <person name="Hernandez J.R."/>
            <person name="Houck J."/>
            <person name="Hostin D."/>
            <person name="Houston K.A."/>
            <person name="Howland T.J."/>
            <person name="Wei M.-H."/>
            <person name="Ibegwam C."/>
            <person name="Jalali M."/>
            <person name="Kalush F."/>
            <person name="Karpen G.H."/>
            <person name="Ke Z."/>
            <person name="Kennison J.A."/>
            <person name="Ketchum K.A."/>
            <person name="Kimmel B.E."/>
            <person name="Kodira C.D."/>
            <person name="Kraft C.L."/>
            <person name="Kravitz S."/>
            <person name="Kulp D."/>
            <person name="Lai Z."/>
            <person name="Lasko P."/>
            <person name="Lei Y."/>
            <person name="Levitsky A.A."/>
            <person name="Li J.H."/>
            <person name="Li Z."/>
            <person name="Liang Y."/>
            <person name="Lin X."/>
            <person name="Liu X."/>
            <person name="Mattei B."/>
            <person name="McIntosh T.C."/>
            <person name="McLeod M.P."/>
            <person name="McPherson D."/>
            <person name="Merkulov G."/>
            <person name="Milshina N.V."/>
            <person name="Mobarry C."/>
            <person name="Morris J."/>
            <person name="Moshrefi A."/>
            <person name="Mount S.M."/>
            <person name="Moy M."/>
            <person name="Murphy B."/>
            <person name="Murphy L."/>
            <person name="Muzny D.M."/>
            <person name="Nelson D.L."/>
            <person name="Nelson D.R."/>
            <person name="Nelson K.A."/>
            <person name="Nixon K."/>
            <person name="Nusskern D.R."/>
            <person name="Pacleb J.M."/>
            <person name="Palazzolo M."/>
            <person name="Pittman G.S."/>
            <person name="Pan S."/>
            <person name="Pollard J."/>
            <person name="Puri V."/>
            <person name="Reese M.G."/>
            <person name="Reinert K."/>
            <person name="Remington K."/>
            <person name="Saunders R.D.C."/>
            <person name="Scheeler F."/>
            <person name="Shen H."/>
            <person name="Shue B.C."/>
            <person name="Siden-Kiamos I."/>
            <person name="Simpson M."/>
            <person name="Skupski M.P."/>
            <person name="Smith T.J."/>
            <person name="Spier E."/>
            <person name="Spradling A.C."/>
            <person name="Stapleton M."/>
            <person name="Strong R."/>
            <person name="Sun E."/>
            <person name="Svirskas R."/>
            <person name="Tector C."/>
            <person name="Turner R."/>
            <person name="Venter E."/>
            <person name="Wang A.H."/>
            <person name="Wang X."/>
            <person name="Wang Z.-Y."/>
            <person name="Wassarman D.A."/>
            <person name="Weinstock G.M."/>
            <person name="Weissenbach J."/>
            <person name="Williams S.M."/>
            <person name="Woodage T."/>
            <person name="Worley K.C."/>
            <person name="Wu D."/>
            <person name="Yang S."/>
            <person name="Yao Q.A."/>
            <person name="Ye J."/>
            <person name="Yeh R.-F."/>
            <person name="Zaveri J.S."/>
            <person name="Zhan M."/>
            <person name="Zhang G."/>
            <person name="Zhao Q."/>
            <person name="Zheng L."/>
            <person name="Zheng X.H."/>
            <person name="Zhong F.N."/>
            <person name="Zhong W."/>
            <person name="Zhou X."/>
            <person name="Zhu S.C."/>
            <person name="Zhu X."/>
            <person name="Smith H.O."/>
            <person name="Gibbs R.A."/>
            <person name="Myers E.W."/>
            <person name="Rubin G.M."/>
            <person name="Venter J.C."/>
        </authorList>
    </citation>
    <scope>NUCLEOTIDE SEQUENCE [LARGE SCALE GENOMIC DNA]</scope>
    <source>
        <strain>Berkeley</strain>
    </source>
</reference>
<reference key="3">
    <citation type="journal article" date="2002" name="Genome Biol.">
        <title>Annotation of the Drosophila melanogaster euchromatic genome: a systematic review.</title>
        <authorList>
            <person name="Misra S."/>
            <person name="Crosby M.A."/>
            <person name="Mungall C.J."/>
            <person name="Matthews B.B."/>
            <person name="Campbell K.S."/>
            <person name="Hradecky P."/>
            <person name="Huang Y."/>
            <person name="Kaminker J.S."/>
            <person name="Millburn G.H."/>
            <person name="Prochnik S.E."/>
            <person name="Smith C.D."/>
            <person name="Tupy J.L."/>
            <person name="Whitfield E.J."/>
            <person name="Bayraktaroglu L."/>
            <person name="Berman B.P."/>
            <person name="Bettencourt B.R."/>
            <person name="Celniker S.E."/>
            <person name="de Grey A.D.N.J."/>
            <person name="Drysdale R.A."/>
            <person name="Harris N.L."/>
            <person name="Richter J."/>
            <person name="Russo S."/>
            <person name="Schroeder A.J."/>
            <person name="Shu S.Q."/>
            <person name="Stapleton M."/>
            <person name="Yamada C."/>
            <person name="Ashburner M."/>
            <person name="Gelbart W.M."/>
            <person name="Rubin G.M."/>
            <person name="Lewis S.E."/>
        </authorList>
    </citation>
    <scope>GENOME REANNOTATION</scope>
    <source>
        <strain>Berkeley</strain>
    </source>
</reference>
<reference key="4">
    <citation type="journal article" date="2002" name="Genome Biol.">
        <title>A Drosophila full-length cDNA resource.</title>
        <authorList>
            <person name="Stapleton M."/>
            <person name="Carlson J.W."/>
            <person name="Brokstein P."/>
            <person name="Yu C."/>
            <person name="Champe M."/>
            <person name="George R.A."/>
            <person name="Guarin H."/>
            <person name="Kronmiller B."/>
            <person name="Pacleb J.M."/>
            <person name="Park S."/>
            <person name="Wan K.H."/>
            <person name="Rubin G.M."/>
            <person name="Celniker S.E."/>
        </authorList>
    </citation>
    <scope>NUCLEOTIDE SEQUENCE [LARGE SCALE MRNA]</scope>
    <source>
        <strain>Berkeley</strain>
        <tissue>Head</tissue>
    </source>
</reference>
<reference key="5">
    <citation type="journal article" date="1996" name="EMBO J.">
        <title>The gap protein knirps mediates both quenching and direct repression in the Drosophila embryo.</title>
        <authorList>
            <person name="Arnosti D.N."/>
            <person name="Gray S."/>
            <person name="Barolo S."/>
            <person name="Zhou J."/>
            <person name="Levine M."/>
        </authorList>
    </citation>
    <scope>FUNCTION</scope>
    <scope>SUBCELLULAR LOCATION</scope>
</reference>
<evidence type="ECO:0000255" key="1">
    <source>
        <dbReference type="PROSITE-ProRule" id="PRU00407"/>
    </source>
</evidence>
<evidence type="ECO:0000256" key="2">
    <source>
        <dbReference type="SAM" id="MobiDB-lite"/>
    </source>
</evidence>
<evidence type="ECO:0000269" key="3">
    <source>
    </source>
</evidence>
<evidence type="ECO:0000305" key="4"/>
<accession>P10734</accession>
<accession>Q540X6</accession>
<accession>Q9VPC6</accession>
<sequence length="429" mass="45611">MNQTCKVCGEPAAGFHFGAFTCEGCKSFFGRSYNNISTISECKNEGKCIIDKKNRTTCKACRLRKCYNVGMSKGGSRYGRRSNWFKIHCLLQEHEQAAAAAGKAPPLAGGVSVGGAPSASSPVGSPHTPGFGDMAAHLHHHHQQQQQQQVPRHPHMPLLGYPSYLSDPSAALPFFSMMGGVPHQSPFQLPPHLLFPGYHASAAAAAASAADAAYRQEMYKHRQSVDSVESQNRFSPASQPPVVQPTSSARQSPIDVCLEEDVHSVHSHQSSASLLHPIAIRATPTTPTSSSPLSFAAKMQSLSPVSVCSIGGETTSVVPVHPPTVSAQEGPMDLSMKTSRSSVHSFNDSGSEDQEVEVAPRRKFYQLEAECLTTSSSSSSHSAAHSPNTTTAHAEVKRQKLGGAEATHFGGFAVAHNAASAMRGIFVCV</sequence>
<feature type="chain" id="PRO_0000053743" description="Zygotic gap protein knirps">
    <location>
        <begin position="1"/>
        <end position="429"/>
    </location>
</feature>
<feature type="DNA-binding region" description="Nuclear receptor" evidence="1">
    <location>
        <begin position="2"/>
        <end position="78"/>
    </location>
</feature>
<feature type="zinc finger region" description="NR C4-type" evidence="1">
    <location>
        <begin position="5"/>
        <end position="25"/>
    </location>
</feature>
<feature type="zinc finger region" description="NR C4-type" evidence="1">
    <location>
        <begin position="42"/>
        <end position="66"/>
    </location>
</feature>
<feature type="region of interest" description="Disordered" evidence="2">
    <location>
        <begin position="112"/>
        <end position="148"/>
    </location>
</feature>
<feature type="region of interest" description="Disordered" evidence="2">
    <location>
        <begin position="223"/>
        <end position="250"/>
    </location>
</feature>
<feature type="region of interest" description="Disordered" evidence="2">
    <location>
        <begin position="338"/>
        <end position="357"/>
    </location>
</feature>
<feature type="region of interest" description="Disordered" evidence="2">
    <location>
        <begin position="375"/>
        <end position="397"/>
    </location>
</feature>
<feature type="compositionally biased region" description="Low complexity" evidence="2">
    <location>
        <begin position="112"/>
        <end position="126"/>
    </location>
</feature>
<feature type="compositionally biased region" description="Polar residues" evidence="2">
    <location>
        <begin position="225"/>
        <end position="237"/>
    </location>
</feature>
<feature type="compositionally biased region" description="Polar residues" evidence="2">
    <location>
        <begin position="338"/>
        <end position="349"/>
    </location>
</feature>
<feature type="compositionally biased region" description="Low complexity" evidence="2">
    <location>
        <begin position="375"/>
        <end position="393"/>
    </location>
</feature>
<name>KNIR_DROME</name>
<comment type="function">
    <text evidence="3">Transcriptional repressor. Binds to multiple sites in the eve stripe 3 enhancer element. Plays an essential role in the segmentation process both by refining the expression patterns of gap genes and by establishing pair-rules stripes of gene expression.</text>
</comment>
<comment type="interaction">
    <interactant intactId="EBI-170297">
        <id>P10734</id>
    </interactant>
    <interactant intactId="EBI-159330">
        <id>O46036</id>
        <label>CtBP</label>
    </interactant>
    <organismsDiffer>false</organismsDiffer>
    <experiments>5</experiments>
</comment>
<comment type="interaction">
    <interactant intactId="EBI-170297">
        <id>P10734</id>
    </interactant>
    <interactant intactId="EBI-153866">
        <id>P16371</id>
        <label>gro</label>
    </interactant>
    <organismsDiffer>false</organismsDiffer>
    <experiments>5</experiments>
</comment>
<comment type="subcellular location">
    <subcellularLocation>
        <location evidence="1 3">Nucleus</location>
    </subcellularLocation>
</comment>
<comment type="similarity">
    <text evidence="4">Belongs to the nuclear hormone receptor family. NR0 subfamily.</text>
</comment>
<keyword id="KW-0217">Developmental protein</keyword>
<keyword id="KW-0238">DNA-binding</keyword>
<keyword id="KW-0479">Metal-binding</keyword>
<keyword id="KW-0539">Nucleus</keyword>
<keyword id="KW-0675">Receptor</keyword>
<keyword id="KW-1185">Reference proteome</keyword>
<keyword id="KW-0678">Repressor</keyword>
<keyword id="KW-0804">Transcription</keyword>
<keyword id="KW-0805">Transcription regulation</keyword>
<keyword id="KW-0862">Zinc</keyword>
<keyword id="KW-0863">Zinc-finger</keyword>
<protein>
    <recommendedName>
        <fullName>Zygotic gap protein knirps</fullName>
    </recommendedName>
    <alternativeName>
        <fullName>Nuclear receptor subfamily 0 group A member 1</fullName>
    </alternativeName>
</protein>
<organism>
    <name type="scientific">Drosophila melanogaster</name>
    <name type="common">Fruit fly</name>
    <dbReference type="NCBI Taxonomy" id="7227"/>
    <lineage>
        <taxon>Eukaryota</taxon>
        <taxon>Metazoa</taxon>
        <taxon>Ecdysozoa</taxon>
        <taxon>Arthropoda</taxon>
        <taxon>Hexapoda</taxon>
        <taxon>Insecta</taxon>
        <taxon>Pterygota</taxon>
        <taxon>Neoptera</taxon>
        <taxon>Endopterygota</taxon>
        <taxon>Diptera</taxon>
        <taxon>Brachycera</taxon>
        <taxon>Muscomorpha</taxon>
        <taxon>Ephydroidea</taxon>
        <taxon>Drosophilidae</taxon>
        <taxon>Drosophila</taxon>
        <taxon>Sophophora</taxon>
    </lineage>
</organism>
<proteinExistence type="evidence at protein level"/>
<dbReference type="EMBL" id="X13331">
    <property type="protein sequence ID" value="CAA31709.1"/>
    <property type="molecule type" value="Genomic_DNA"/>
</dbReference>
<dbReference type="EMBL" id="AE014296">
    <property type="protein sequence ID" value="AAF51629.2"/>
    <property type="molecule type" value="Genomic_DNA"/>
</dbReference>
<dbReference type="EMBL" id="AY118798">
    <property type="protein sequence ID" value="AAM50658.1"/>
    <property type="molecule type" value="mRNA"/>
</dbReference>
<dbReference type="PIR" id="S01919">
    <property type="entry name" value="S01919"/>
</dbReference>
<dbReference type="RefSeq" id="NP_524187.1">
    <property type="nucleotide sequence ID" value="NM_079463.3"/>
</dbReference>
<dbReference type="SMR" id="P10734"/>
<dbReference type="BioGRID" id="65544">
    <property type="interactions" value="33"/>
</dbReference>
<dbReference type="DIP" id="DIP-17716N"/>
<dbReference type="ELM" id="P10734"/>
<dbReference type="FunCoup" id="P10734">
    <property type="interactions" value="41"/>
</dbReference>
<dbReference type="IntAct" id="P10734">
    <property type="interactions" value="11"/>
</dbReference>
<dbReference type="MINT" id="P10734"/>
<dbReference type="STRING" id="7227.FBpp0311151"/>
<dbReference type="PaxDb" id="7227-FBpp0077941"/>
<dbReference type="DNASU" id="40287"/>
<dbReference type="EnsemblMetazoa" id="FBtr0078283">
    <property type="protein sequence ID" value="FBpp0077941"/>
    <property type="gene ID" value="FBgn0001320"/>
</dbReference>
<dbReference type="GeneID" id="40287"/>
<dbReference type="KEGG" id="dme:Dmel_CG4717"/>
<dbReference type="AGR" id="FB:FBgn0001320"/>
<dbReference type="CTD" id="40287"/>
<dbReference type="FlyBase" id="FBgn0001320">
    <property type="gene designation" value="kni"/>
</dbReference>
<dbReference type="VEuPathDB" id="VectorBase:FBgn0001320"/>
<dbReference type="eggNOG" id="ENOG502QURP">
    <property type="taxonomic scope" value="Eukaryota"/>
</dbReference>
<dbReference type="GeneTree" id="ENSGT00940000170271"/>
<dbReference type="HOGENOM" id="CLU_633508_0_0_1"/>
<dbReference type="InParanoid" id="P10734"/>
<dbReference type="OrthoDB" id="5850793at2759"/>
<dbReference type="PhylomeDB" id="P10734"/>
<dbReference type="Reactome" id="R-DME-1251985">
    <property type="pathway name" value="Nuclear signaling by ERBB4"/>
</dbReference>
<dbReference type="Reactome" id="R-DME-1257604">
    <property type="pathway name" value="PIP3 activates AKT signaling"/>
</dbReference>
<dbReference type="Reactome" id="R-DME-3371497">
    <property type="pathway name" value="HSP90 chaperone cycle for steroid hormone receptors (SHR) in the presence of ligand"/>
</dbReference>
<dbReference type="Reactome" id="R-DME-383280">
    <property type="pathway name" value="Nuclear Receptor transcription pathway"/>
</dbReference>
<dbReference type="Reactome" id="R-DME-5625886">
    <property type="pathway name" value="Activated PKN1 stimulates transcription of AR (androgen receptor) regulated genes KLK2 and KLK3"/>
</dbReference>
<dbReference type="Reactome" id="R-DME-5689880">
    <property type="pathway name" value="Ub-specific processing proteases"/>
</dbReference>
<dbReference type="Reactome" id="R-DME-5689896">
    <property type="pathway name" value="Ovarian tumor domain proteases"/>
</dbReference>
<dbReference type="Reactome" id="R-DME-6811558">
    <property type="pathway name" value="PI5P, PP2A and IER3 Regulate PI3K/AKT Signaling"/>
</dbReference>
<dbReference type="Reactome" id="R-DME-8931987">
    <property type="pathway name" value="RUNX1 regulates estrogen receptor mediated transcription"/>
</dbReference>
<dbReference type="Reactome" id="R-DME-8939211">
    <property type="pathway name" value="ESR-mediated signaling"/>
</dbReference>
<dbReference type="Reactome" id="R-DME-8940973">
    <property type="pathway name" value="RUNX2 regulates osteoblast differentiation"/>
</dbReference>
<dbReference type="Reactome" id="R-DME-9009391">
    <property type="pathway name" value="Extra-nuclear estrogen signaling"/>
</dbReference>
<dbReference type="Reactome" id="R-DME-9018519">
    <property type="pathway name" value="Estrogen-dependent gene expression"/>
</dbReference>
<dbReference type="Reactome" id="R-DME-9841251">
    <property type="pathway name" value="Mitochondrial unfolded protein response (UPRmt)"/>
</dbReference>
<dbReference type="SignaLink" id="P10734"/>
<dbReference type="BioGRID-ORCS" id="40287">
    <property type="hits" value="0 hits in 1 CRISPR screen"/>
</dbReference>
<dbReference type="GenomeRNAi" id="40287"/>
<dbReference type="PRO" id="PR:P10734"/>
<dbReference type="Proteomes" id="UP000000803">
    <property type="component" value="Chromosome 3L"/>
</dbReference>
<dbReference type="Bgee" id="FBgn0001320">
    <property type="expression patterns" value="Expressed in tormogen cell in proboscis and 89 other cell types or tissues"/>
</dbReference>
<dbReference type="ExpressionAtlas" id="P10734">
    <property type="expression patterns" value="baseline and differential"/>
</dbReference>
<dbReference type="GO" id="GO:0000785">
    <property type="term" value="C:chromatin"/>
    <property type="evidence" value="ECO:0000318"/>
    <property type="project" value="GO_Central"/>
</dbReference>
<dbReference type="GO" id="GO:0005634">
    <property type="term" value="C:nucleus"/>
    <property type="evidence" value="ECO:0000318"/>
    <property type="project" value="GO_Central"/>
</dbReference>
<dbReference type="GO" id="GO:0003700">
    <property type="term" value="F:DNA-binding transcription factor activity"/>
    <property type="evidence" value="ECO:0000314"/>
    <property type="project" value="FlyBase"/>
</dbReference>
<dbReference type="GO" id="GO:0140297">
    <property type="term" value="F:DNA-binding transcription factor binding"/>
    <property type="evidence" value="ECO:0000353"/>
    <property type="project" value="FlyBase"/>
</dbReference>
<dbReference type="GO" id="GO:0001227">
    <property type="term" value="F:DNA-binding transcription repressor activity, RNA polymerase II-specific"/>
    <property type="evidence" value="ECO:0000314"/>
    <property type="project" value="FlyBase"/>
</dbReference>
<dbReference type="GO" id="GO:0034056">
    <property type="term" value="F:estrogen response element binding"/>
    <property type="evidence" value="ECO:0000318"/>
    <property type="project" value="GO_Central"/>
</dbReference>
<dbReference type="GO" id="GO:0004879">
    <property type="term" value="F:nuclear receptor activity"/>
    <property type="evidence" value="ECO:0000318"/>
    <property type="project" value="GO_Central"/>
</dbReference>
<dbReference type="GO" id="GO:0008270">
    <property type="term" value="F:zinc ion binding"/>
    <property type="evidence" value="ECO:0007669"/>
    <property type="project" value="UniProtKB-KW"/>
</dbReference>
<dbReference type="GO" id="GO:0007427">
    <property type="term" value="P:epithelial cell migration, open tracheal system"/>
    <property type="evidence" value="ECO:0000304"/>
    <property type="project" value="FlyBase"/>
</dbReference>
<dbReference type="GO" id="GO:0045892">
    <property type="term" value="P:negative regulation of DNA-templated transcription"/>
    <property type="evidence" value="ECO:0000314"/>
    <property type="project" value="FlyBase"/>
</dbReference>
<dbReference type="GO" id="GO:0006355">
    <property type="term" value="P:regulation of DNA-templated transcription"/>
    <property type="evidence" value="ECO:0000315"/>
    <property type="project" value="FlyBase"/>
</dbReference>
<dbReference type="GO" id="GO:0007088">
    <property type="term" value="P:regulation of mitotic nuclear division"/>
    <property type="evidence" value="ECO:0000315"/>
    <property type="project" value="FlyBase"/>
</dbReference>
<dbReference type="GO" id="GO:0006357">
    <property type="term" value="P:regulation of transcription by RNA polymerase II"/>
    <property type="evidence" value="ECO:0000318"/>
    <property type="project" value="GO_Central"/>
</dbReference>
<dbReference type="GO" id="GO:0035290">
    <property type="term" value="P:trunk segmentation"/>
    <property type="evidence" value="ECO:0000304"/>
    <property type="project" value="FlyBase"/>
</dbReference>
<dbReference type="GO" id="GO:0007354">
    <property type="term" value="P:zygotic determination of anterior/posterior axis, embryo"/>
    <property type="evidence" value="ECO:0000304"/>
    <property type="project" value="FlyBase"/>
</dbReference>
<dbReference type="FunFam" id="3.30.50.10:FF:000034">
    <property type="entry name" value="CLUMA_CG002674, isoform A"/>
    <property type="match status" value="1"/>
</dbReference>
<dbReference type="Gene3D" id="3.30.50.10">
    <property type="entry name" value="Erythroid Transcription Factor GATA-1, subunit A"/>
    <property type="match status" value="1"/>
</dbReference>
<dbReference type="InterPro" id="IPR050200">
    <property type="entry name" value="Nuclear_hormone_rcpt_NR3"/>
</dbReference>
<dbReference type="InterPro" id="IPR001628">
    <property type="entry name" value="Znf_hrmn_rcpt"/>
</dbReference>
<dbReference type="InterPro" id="IPR013088">
    <property type="entry name" value="Znf_NHR/GATA"/>
</dbReference>
<dbReference type="PANTHER" id="PTHR48092">
    <property type="entry name" value="KNIRPS-RELATED PROTEIN-RELATED"/>
    <property type="match status" value="1"/>
</dbReference>
<dbReference type="Pfam" id="PF00105">
    <property type="entry name" value="zf-C4"/>
    <property type="match status" value="1"/>
</dbReference>
<dbReference type="PRINTS" id="PR00047">
    <property type="entry name" value="STROIDFINGER"/>
</dbReference>
<dbReference type="SMART" id="SM00399">
    <property type="entry name" value="ZnF_C4"/>
    <property type="match status" value="1"/>
</dbReference>
<dbReference type="SUPFAM" id="SSF57716">
    <property type="entry name" value="Glucocorticoid receptor-like (DNA-binding domain)"/>
    <property type="match status" value="1"/>
</dbReference>
<dbReference type="PROSITE" id="PS00031">
    <property type="entry name" value="NUCLEAR_REC_DBD_1"/>
    <property type="match status" value="1"/>
</dbReference>
<dbReference type="PROSITE" id="PS51030">
    <property type="entry name" value="NUCLEAR_REC_DBD_2"/>
    <property type="match status" value="1"/>
</dbReference>